<proteinExistence type="inferred from homology"/>
<comment type="function">
    <text evidence="1 2">E3 ubiquitin-protein ligase that cooperates with the microRNAs (miRNAs) machinery and promotes embryonic stem cells proliferation and maintenance (By similarity). Binds to miRNAs and associates with AGO2, participating in post-transcriptional repression of transcripts such as CDKN1A (By similarity). In addition, participates in post-transcriptional mRNA repression in a miRNA independent mechanism (By similarity). Facilitates the G1-S transition to promote rapid embryonic stem cell self-renewal by repressing CDKN1A expression. Required to maintain proliferation and prevent premature differentiation of neural progenitor cells during early neural development: positively regulates FGF signaling by controlling the stability of SHCBP1 (By similarity). Specific regulator of miRNA biogenesis. Binds to miRNA MIR29A hairpin and postranscriptionally modulates MIR29A levels, which indirectly regulates TET proteins expression (By similarity).</text>
</comment>
<comment type="catalytic activity">
    <reaction>
        <text>S-ubiquitinyl-[E2 ubiquitin-conjugating enzyme]-L-cysteine + [acceptor protein]-L-lysine = [E2 ubiquitin-conjugating enzyme]-L-cysteine + N(6)-ubiquitinyl-[acceptor protein]-L-lysine.</text>
        <dbReference type="EC" id="2.3.2.27"/>
    </reaction>
</comment>
<comment type="pathway">
    <text>Protein modification; protein ubiquitination.</text>
</comment>
<comment type="subunit">
    <text evidence="1 2">Interacts (via NHL repeats) with AGO2; the interaction increases in presence of RNA. Interacts with HSP90AA1. Interacts (via NHL repeats) with MOV10, PABPC1, PUM1, PUM2, STAU2, XRN1 and XRN2 in an RNA-dependent manner (By similarity). Interacts with SHCBP1; leading to enhance its stability (By similarity).</text>
</comment>
<comment type="subcellular location">
    <subcellularLocation>
        <location evidence="2">Cytoplasm</location>
        <location evidence="2">P-body</location>
    </subcellularLocation>
</comment>
<comment type="domain">
    <text evidence="2">The NHL domain, containing the 6 NHL repeats, is necessary and sufficient to target RNA but not to repress mRNA. The minimal region needed to execute repression consists of the coiled coil domain and the Filamin repeat. The RING-type domain is dispensable for mRNA repression.</text>
</comment>
<comment type="PTM">
    <text evidence="1">Autoubiquitinated.</text>
</comment>
<comment type="similarity">
    <text evidence="6">Belongs to the TRIM/RBCC family.</text>
</comment>
<organism>
    <name type="scientific">Bos taurus</name>
    <name type="common">Bovine</name>
    <dbReference type="NCBI Taxonomy" id="9913"/>
    <lineage>
        <taxon>Eukaryota</taxon>
        <taxon>Metazoa</taxon>
        <taxon>Chordata</taxon>
        <taxon>Craniata</taxon>
        <taxon>Vertebrata</taxon>
        <taxon>Euteleostomi</taxon>
        <taxon>Mammalia</taxon>
        <taxon>Eutheria</taxon>
        <taxon>Laurasiatheria</taxon>
        <taxon>Artiodactyla</taxon>
        <taxon>Ruminantia</taxon>
        <taxon>Pecora</taxon>
        <taxon>Bovidae</taxon>
        <taxon>Bovinae</taxon>
        <taxon>Bos</taxon>
    </lineage>
</organism>
<dbReference type="EC" id="2.3.2.27"/>
<dbReference type="EMBL" id="HQ826939">
    <property type="protein sequence ID" value="ADZ53892.1"/>
    <property type="molecule type" value="Genomic_DNA"/>
</dbReference>
<dbReference type="EMBL" id="DAAA02053578">
    <property type="status" value="NOT_ANNOTATED_CDS"/>
    <property type="molecule type" value="Genomic_DNA"/>
</dbReference>
<dbReference type="SMR" id="E1BJS7"/>
<dbReference type="FunCoup" id="E1BJS7">
    <property type="interactions" value="56"/>
</dbReference>
<dbReference type="STRING" id="9913.ENSBTAP00000030842"/>
<dbReference type="PaxDb" id="9913-ENSBTAP00000030842"/>
<dbReference type="eggNOG" id="KOG2177">
    <property type="taxonomic scope" value="Eukaryota"/>
</dbReference>
<dbReference type="HOGENOM" id="CLU_008645_4_1_1"/>
<dbReference type="InParanoid" id="E1BJS7"/>
<dbReference type="OrthoDB" id="342730at2759"/>
<dbReference type="TreeFam" id="TF331018"/>
<dbReference type="UniPathway" id="UPA00143"/>
<dbReference type="Proteomes" id="UP000009136">
    <property type="component" value="Unplaced"/>
</dbReference>
<dbReference type="GO" id="GO:0000932">
    <property type="term" value="C:P-body"/>
    <property type="evidence" value="ECO:0000250"/>
    <property type="project" value="UniProtKB"/>
</dbReference>
<dbReference type="GO" id="GO:0035198">
    <property type="term" value="F:miRNA binding"/>
    <property type="evidence" value="ECO:0000250"/>
    <property type="project" value="UniProtKB"/>
</dbReference>
<dbReference type="GO" id="GO:0061630">
    <property type="term" value="F:ubiquitin protein ligase activity"/>
    <property type="evidence" value="ECO:0000318"/>
    <property type="project" value="GO_Central"/>
</dbReference>
<dbReference type="GO" id="GO:0004842">
    <property type="term" value="F:ubiquitin-protein transferase activity"/>
    <property type="evidence" value="ECO:0000250"/>
    <property type="project" value="UniProtKB"/>
</dbReference>
<dbReference type="GO" id="GO:0008270">
    <property type="term" value="F:zinc ion binding"/>
    <property type="evidence" value="ECO:0007669"/>
    <property type="project" value="UniProtKB-KW"/>
</dbReference>
<dbReference type="GO" id="GO:0008543">
    <property type="term" value="P:fibroblast growth factor receptor signaling pathway"/>
    <property type="evidence" value="ECO:0000250"/>
    <property type="project" value="UniProtKB"/>
</dbReference>
<dbReference type="GO" id="GO:0000082">
    <property type="term" value="P:G1/S transition of mitotic cell cycle"/>
    <property type="evidence" value="ECO:0000250"/>
    <property type="project" value="UniProtKB"/>
</dbReference>
<dbReference type="GO" id="GO:0035196">
    <property type="term" value="P:miRNA processing"/>
    <property type="evidence" value="ECO:0000250"/>
    <property type="project" value="UniProtKB"/>
</dbReference>
<dbReference type="GO" id="GO:0035278">
    <property type="term" value="P:miRNA-mediated gene silencing by inhibition of translation"/>
    <property type="evidence" value="ECO:0000250"/>
    <property type="project" value="UniProtKB"/>
</dbReference>
<dbReference type="GO" id="GO:0021915">
    <property type="term" value="P:neural tube development"/>
    <property type="evidence" value="ECO:0000250"/>
    <property type="project" value="UniProtKB"/>
</dbReference>
<dbReference type="GO" id="GO:0010608">
    <property type="term" value="P:post-transcriptional regulation of gene expression"/>
    <property type="evidence" value="ECO:0000250"/>
    <property type="project" value="UniProtKB"/>
</dbReference>
<dbReference type="GO" id="GO:0043161">
    <property type="term" value="P:proteasome-mediated ubiquitin-dependent protein catabolic process"/>
    <property type="evidence" value="ECO:0000318"/>
    <property type="project" value="GO_Central"/>
</dbReference>
<dbReference type="GO" id="GO:0051865">
    <property type="term" value="P:protein autoubiquitination"/>
    <property type="evidence" value="ECO:0000250"/>
    <property type="project" value="UniProtKB"/>
</dbReference>
<dbReference type="GO" id="GO:0000209">
    <property type="term" value="P:protein polyubiquitination"/>
    <property type="evidence" value="ECO:0000318"/>
    <property type="project" value="GO_Central"/>
</dbReference>
<dbReference type="GO" id="GO:2000177">
    <property type="term" value="P:regulation of neural precursor cell proliferation"/>
    <property type="evidence" value="ECO:0000250"/>
    <property type="project" value="UniProtKB"/>
</dbReference>
<dbReference type="GO" id="GO:0072089">
    <property type="term" value="P:stem cell proliferation"/>
    <property type="evidence" value="ECO:0000250"/>
    <property type="project" value="UniProtKB"/>
</dbReference>
<dbReference type="CDD" id="cd19812">
    <property type="entry name" value="Bbox1_TRIM71_C-VII"/>
    <property type="match status" value="1"/>
</dbReference>
<dbReference type="CDD" id="cd19796">
    <property type="entry name" value="Bbox2_TRIM71_C-VII"/>
    <property type="match status" value="1"/>
</dbReference>
<dbReference type="CDD" id="cd14954">
    <property type="entry name" value="NHL_TRIM71_like"/>
    <property type="match status" value="1"/>
</dbReference>
<dbReference type="CDD" id="cd16589">
    <property type="entry name" value="RING-HC_TRIM71_C-VII"/>
    <property type="match status" value="1"/>
</dbReference>
<dbReference type="FunFam" id="2.120.10.30:FF:000013">
    <property type="entry name" value="E3 ubiquitin-protein ligase TRIM71"/>
    <property type="match status" value="1"/>
</dbReference>
<dbReference type="FunFam" id="2.120.10.30:FF:000025">
    <property type="entry name" value="E3 ubiquitin-protein ligase TRIM71"/>
    <property type="match status" value="1"/>
</dbReference>
<dbReference type="FunFam" id="2.120.10.30:FF:000080">
    <property type="entry name" value="E3 ubiquitin-protein ligase TRIM71"/>
    <property type="match status" value="1"/>
</dbReference>
<dbReference type="FunFam" id="2.60.40.10:FF:000527">
    <property type="entry name" value="E3 ubiquitin-protein ligase TRIM71"/>
    <property type="match status" value="1"/>
</dbReference>
<dbReference type="FunFam" id="3.30.160.60:FF:000923">
    <property type="entry name" value="E3 ubiquitin-protein ligase TRIM71"/>
    <property type="match status" value="1"/>
</dbReference>
<dbReference type="Gene3D" id="4.10.830.40">
    <property type="match status" value="1"/>
</dbReference>
<dbReference type="Gene3D" id="3.30.160.60">
    <property type="entry name" value="Classic Zinc Finger"/>
    <property type="match status" value="1"/>
</dbReference>
<dbReference type="Gene3D" id="2.60.40.10">
    <property type="entry name" value="Immunoglobulins"/>
    <property type="match status" value="1"/>
</dbReference>
<dbReference type="Gene3D" id="2.120.10.30">
    <property type="entry name" value="TolB, C-terminal domain"/>
    <property type="match status" value="2"/>
</dbReference>
<dbReference type="InterPro" id="IPR011042">
    <property type="entry name" value="6-blade_b-propeller_TolB-like"/>
</dbReference>
<dbReference type="InterPro" id="IPR017868">
    <property type="entry name" value="Filamin/ABP280_repeat-like"/>
</dbReference>
<dbReference type="InterPro" id="IPR001298">
    <property type="entry name" value="Filamin/ABP280_rpt"/>
</dbReference>
<dbReference type="InterPro" id="IPR013783">
    <property type="entry name" value="Ig-like_fold"/>
</dbReference>
<dbReference type="InterPro" id="IPR014756">
    <property type="entry name" value="Ig_E-set"/>
</dbReference>
<dbReference type="InterPro" id="IPR001258">
    <property type="entry name" value="NHL_repeat"/>
</dbReference>
<dbReference type="InterPro" id="IPR050952">
    <property type="entry name" value="TRIM-NHL_E3_ligases"/>
</dbReference>
<dbReference type="InterPro" id="IPR000315">
    <property type="entry name" value="Znf_B-box"/>
</dbReference>
<dbReference type="PANTHER" id="PTHR24104">
    <property type="entry name" value="E3 UBIQUITIN-PROTEIN LIGASE NHLRC1-RELATED"/>
    <property type="match status" value="1"/>
</dbReference>
<dbReference type="PANTHER" id="PTHR24104:SF48">
    <property type="entry name" value="PROTEIN WECH"/>
    <property type="match status" value="1"/>
</dbReference>
<dbReference type="Pfam" id="PF00630">
    <property type="entry name" value="Filamin"/>
    <property type="match status" value="1"/>
</dbReference>
<dbReference type="Pfam" id="PF01436">
    <property type="entry name" value="NHL"/>
    <property type="match status" value="6"/>
</dbReference>
<dbReference type="Pfam" id="PF00643">
    <property type="entry name" value="zf-B_box"/>
    <property type="match status" value="1"/>
</dbReference>
<dbReference type="SMART" id="SM00336">
    <property type="entry name" value="BBOX"/>
    <property type="match status" value="2"/>
</dbReference>
<dbReference type="SMART" id="SM00557">
    <property type="entry name" value="IG_FLMN"/>
    <property type="match status" value="1"/>
</dbReference>
<dbReference type="SUPFAM" id="SSF57845">
    <property type="entry name" value="B-box zinc-binding domain"/>
    <property type="match status" value="1"/>
</dbReference>
<dbReference type="SUPFAM" id="SSF81296">
    <property type="entry name" value="E set domains"/>
    <property type="match status" value="1"/>
</dbReference>
<dbReference type="SUPFAM" id="SSF101898">
    <property type="entry name" value="NHL repeat"/>
    <property type="match status" value="1"/>
</dbReference>
<dbReference type="PROSITE" id="PS50194">
    <property type="entry name" value="FILAMIN_REPEAT"/>
    <property type="match status" value="1"/>
</dbReference>
<dbReference type="PROSITE" id="PS51125">
    <property type="entry name" value="NHL"/>
    <property type="match status" value="6"/>
</dbReference>
<dbReference type="PROSITE" id="PS50119">
    <property type="entry name" value="ZF_BBOX"/>
    <property type="match status" value="1"/>
</dbReference>
<protein>
    <recommendedName>
        <fullName>E3 ubiquitin-protein ligase TRIM71</fullName>
        <ecNumber>2.3.2.27</ecNumber>
    </recommendedName>
    <alternativeName>
        <fullName>Protein lin-41 homolog</fullName>
    </alternativeName>
    <alternativeName>
        <fullName evidence="6">RING-type E3 ubiquitin transferase TRIM71</fullName>
    </alternativeName>
    <alternativeName>
        <fullName>Tripartite motif-containing protein 71</fullName>
    </alternativeName>
</protein>
<sequence>MASFPETDFQICLLCKEMCGSPAPLSSNSSASSSSSQTSTSSGGGGGGPGAAARRLHVLPCLAFCRPCLEAHRGGAPGEPLKLRCPVCDQKVVLAEAAGMDARPSSAFLLSNLLDAVVATADEPPPKNGRAGAAAGAGGHGSNHRHHAHHAHPRAAASAPPPPLPPAPPPPAPPRSAPGGPAGSPSALLLRRPHGCSSCDEGNAASSRCLDCQEHLCDNCVRAHQRVRLTKDHYIERGPPGPAAAAAAAAAQQLGLGPPFPGAPFSLLSVFPERLGFCQHHDDEVLHLYCDTCSVPICRECTVGRHGGHSFVYLQEALQDSRALTIQLLADAQQGRQAIQLSIEQAQTVAEQVEMKAKVVQSEVKAVTARHKKALEERECELLWKVEKIRQVKAKSLYLQVEKLRQNLNKLESTISAVQQVLEEGRALDILLARDRMLAQVQELKTVRSLLQPQEDDRVMFTPPDQALYLAIKSFGFVSSGAFAPLTKATGDGLKRALQGKVASFTVIGYDHDGEPRLSGGDLMSAVVLGPDGNLFGAEVSDQQNGTYVVSYRPQLEGEHLVSVTLCNQHIENSPFKVVVKSGRSYVGIGLPGLSFGSEGDSDGKLCRPWGVSVDKEGYIVVADRSNNRIQVFKPCGAFHHKFGTLGSRPGQFDRPAGVACDASRRIVVADKDNHRIQIFTFEGQFLLKFGEKGTKNGQFNYPWDVAVNSEGKILVSDTRNHRIQLFGPDGVFLNKYGFEGALWKHFDSPRGVAFNHEGHLVVTDFNNHRLLVIHPDCQSARFLGSEGTGNGQFLRPQGVAVDQEGRIIVADSRNHRVQMFESNGSFLCKFGAQGSGFGQMDRPSGIAVTPDGMIVVVDFGNNRILIF</sequence>
<reference key="1">
    <citation type="journal article" date="2009" name="Genome Biol.">
        <title>A whole-genome assembly of the domestic cow, Bos taurus.</title>
        <authorList>
            <person name="Zimin A.V."/>
            <person name="Delcher A.L."/>
            <person name="Florea L."/>
            <person name="Kelley D.R."/>
            <person name="Schatz M.C."/>
            <person name="Puiu D."/>
            <person name="Hanrahan F."/>
            <person name="Pertea G."/>
            <person name="Van Tassell C.P."/>
            <person name="Sonstegard T.S."/>
            <person name="Marcais G."/>
            <person name="Roberts M."/>
            <person name="Subramanian P."/>
            <person name="Yorke J.A."/>
            <person name="Salzberg S.L."/>
        </authorList>
    </citation>
    <scope>NUCLEOTIDE SEQUENCE [LARGE SCALE GENOMIC DNA]</scope>
    <source>
        <strain>Hereford</strain>
    </source>
</reference>
<reference key="2">
    <citation type="journal article" date="2011" name="Mol. Phylogenet. Evol.">
        <title>Phylogenomic analyses and improved resolution of Cetartiodactyla.</title>
        <authorList>
            <person name="Zhou X."/>
            <person name="Xu S."/>
            <person name="Yang Y."/>
            <person name="Zhou K."/>
            <person name="Yang G."/>
        </authorList>
    </citation>
    <scope>NUCLEOTIDE SEQUENCE [GENOMIC DNA] OF 476-725</scope>
</reference>
<feature type="initiator methionine" description="Removed" evidence="2">
    <location>
        <position position="1"/>
    </location>
</feature>
<feature type="chain" id="PRO_0000420478" description="E3 ubiquitin-protein ligase TRIM71">
    <location>
        <begin position="2"/>
        <end position="868"/>
    </location>
</feature>
<feature type="repeat" description="Filamin">
    <location>
        <begin position="479"/>
        <end position="580"/>
    </location>
</feature>
<feature type="repeat" description="NHL 1">
    <location>
        <begin position="593"/>
        <end position="636"/>
    </location>
</feature>
<feature type="repeat" description="NHL 2">
    <location>
        <begin position="640"/>
        <end position="683"/>
    </location>
</feature>
<feature type="repeat" description="NHL 3">
    <location>
        <begin position="687"/>
        <end position="730"/>
    </location>
</feature>
<feature type="repeat" description="NHL 4">
    <location>
        <begin position="734"/>
        <end position="777"/>
    </location>
</feature>
<feature type="repeat" description="NHL 5">
    <location>
        <begin position="781"/>
        <end position="824"/>
    </location>
</feature>
<feature type="repeat" description="NHL 6">
    <location>
        <begin position="828"/>
        <end position="868"/>
    </location>
</feature>
<feature type="zinc finger region" description="RING-type">
    <location>
        <begin position="12"/>
        <end position="89"/>
    </location>
</feature>
<feature type="zinc finger region" description="B box-type 1; atypical" evidence="4">
    <location>
        <begin position="191"/>
        <end position="238"/>
    </location>
</feature>
<feature type="zinc finger region" description="B box-type 2" evidence="4">
    <location>
        <begin position="273"/>
        <end position="314"/>
    </location>
</feature>
<feature type="region of interest" description="Disordered" evidence="5">
    <location>
        <begin position="26"/>
        <end position="50"/>
    </location>
</feature>
<feature type="region of interest" description="Disordered" evidence="5">
    <location>
        <begin position="121"/>
        <end position="186"/>
    </location>
</feature>
<feature type="coiled-coil region" evidence="3">
    <location>
        <begin position="391"/>
        <end position="427"/>
    </location>
</feature>
<feature type="compositionally biased region" description="Low complexity" evidence="5">
    <location>
        <begin position="26"/>
        <end position="41"/>
    </location>
</feature>
<feature type="compositionally biased region" description="Basic residues" evidence="5">
    <location>
        <begin position="142"/>
        <end position="153"/>
    </location>
</feature>
<feature type="compositionally biased region" description="Pro residues" evidence="5">
    <location>
        <begin position="159"/>
        <end position="176"/>
    </location>
</feature>
<feature type="compositionally biased region" description="Low complexity" evidence="5">
    <location>
        <begin position="177"/>
        <end position="186"/>
    </location>
</feature>
<feature type="binding site" evidence="4">
    <location>
        <position position="278"/>
    </location>
    <ligand>
        <name>Zn(2+)</name>
        <dbReference type="ChEBI" id="CHEBI:29105"/>
    </ligand>
</feature>
<feature type="binding site" evidence="4">
    <location>
        <position position="281"/>
    </location>
    <ligand>
        <name>Zn(2+)</name>
        <dbReference type="ChEBI" id="CHEBI:29105"/>
    </ligand>
</feature>
<feature type="binding site" evidence="4">
    <location>
        <position position="301"/>
    </location>
    <ligand>
        <name>Zn(2+)</name>
        <dbReference type="ChEBI" id="CHEBI:29105"/>
    </ligand>
</feature>
<feature type="binding site" evidence="4">
    <location>
        <position position="306"/>
    </location>
    <ligand>
        <name>Zn(2+)</name>
        <dbReference type="ChEBI" id="CHEBI:29105"/>
    </ligand>
</feature>
<feature type="modified residue" description="N-acetylalanine" evidence="2">
    <location>
        <position position="2"/>
    </location>
</feature>
<keyword id="KW-0007">Acetylation</keyword>
<keyword id="KW-0175">Coiled coil</keyword>
<keyword id="KW-0963">Cytoplasm</keyword>
<keyword id="KW-0217">Developmental protein</keyword>
<keyword id="KW-0479">Metal-binding</keyword>
<keyword id="KW-1185">Reference proteome</keyword>
<keyword id="KW-0677">Repeat</keyword>
<keyword id="KW-0694">RNA-binding</keyword>
<keyword id="KW-0943">RNA-mediated gene silencing</keyword>
<keyword id="KW-0808">Transferase</keyword>
<keyword id="KW-0832">Ubl conjugation</keyword>
<keyword id="KW-0833">Ubl conjugation pathway</keyword>
<keyword id="KW-0862">Zinc</keyword>
<keyword id="KW-0863">Zinc-finger</keyword>
<accession>E1BJS7</accession>
<accession>F2Y8T8</accession>
<name>LIN41_BOVIN</name>
<evidence type="ECO:0000250" key="1">
    <source>
        <dbReference type="UniProtKB" id="Q1PSW8"/>
    </source>
</evidence>
<evidence type="ECO:0000250" key="2">
    <source>
        <dbReference type="UniProtKB" id="Q2Q1W2"/>
    </source>
</evidence>
<evidence type="ECO:0000255" key="3"/>
<evidence type="ECO:0000255" key="4">
    <source>
        <dbReference type="PROSITE-ProRule" id="PRU00024"/>
    </source>
</evidence>
<evidence type="ECO:0000256" key="5">
    <source>
        <dbReference type="SAM" id="MobiDB-lite"/>
    </source>
</evidence>
<evidence type="ECO:0000305" key="6"/>
<gene>
    <name type="primary">TRIM71</name>
    <name type="synonym">LIN41</name>
</gene>